<protein>
    <recommendedName>
        <fullName evidence="1">Ribonuclease Z</fullName>
        <shortName evidence="1">RNase Z</shortName>
        <ecNumber evidence="1">3.1.26.11</ecNumber>
    </recommendedName>
    <alternativeName>
        <fullName evidence="1">tRNA 3 endonuclease</fullName>
    </alternativeName>
    <alternativeName>
        <fullName evidence="1">tRNase Z</fullName>
    </alternativeName>
</protein>
<feature type="chain" id="PRO_1000187942" description="Ribonuclease Z">
    <location>
        <begin position="1"/>
        <end position="318"/>
    </location>
</feature>
<feature type="active site" description="Proton acceptor" evidence="1">
    <location>
        <position position="66"/>
    </location>
</feature>
<feature type="binding site" evidence="1">
    <location>
        <position position="62"/>
    </location>
    <ligand>
        <name>Zn(2+)</name>
        <dbReference type="ChEBI" id="CHEBI:29105"/>
        <label>1</label>
        <note>catalytic</note>
    </ligand>
</feature>
<feature type="binding site" evidence="1">
    <location>
        <position position="64"/>
    </location>
    <ligand>
        <name>Zn(2+)</name>
        <dbReference type="ChEBI" id="CHEBI:29105"/>
        <label>1</label>
        <note>catalytic</note>
    </ligand>
</feature>
<feature type="binding site" evidence="1">
    <location>
        <position position="66"/>
    </location>
    <ligand>
        <name>Zn(2+)</name>
        <dbReference type="ChEBI" id="CHEBI:29105"/>
        <label>2</label>
        <note>catalytic</note>
    </ligand>
</feature>
<feature type="binding site" evidence="1">
    <location>
        <position position="67"/>
    </location>
    <ligand>
        <name>Zn(2+)</name>
        <dbReference type="ChEBI" id="CHEBI:29105"/>
        <label>2</label>
        <note>catalytic</note>
    </ligand>
</feature>
<feature type="binding site" evidence="1">
    <location>
        <position position="140"/>
    </location>
    <ligand>
        <name>Zn(2+)</name>
        <dbReference type="ChEBI" id="CHEBI:29105"/>
        <label>1</label>
        <note>catalytic</note>
    </ligand>
</feature>
<feature type="binding site" evidence="1">
    <location>
        <position position="211"/>
    </location>
    <ligand>
        <name>Zn(2+)</name>
        <dbReference type="ChEBI" id="CHEBI:29105"/>
        <label>1</label>
        <note>catalytic</note>
    </ligand>
</feature>
<feature type="binding site" evidence="1">
    <location>
        <position position="211"/>
    </location>
    <ligand>
        <name>Zn(2+)</name>
        <dbReference type="ChEBI" id="CHEBI:29105"/>
        <label>2</label>
        <note>catalytic</note>
    </ligand>
</feature>
<feature type="binding site" evidence="1">
    <location>
        <position position="269"/>
    </location>
    <ligand>
        <name>Zn(2+)</name>
        <dbReference type="ChEBI" id="CHEBI:29105"/>
        <label>2</label>
        <note>catalytic</note>
    </ligand>
</feature>
<evidence type="ECO:0000255" key="1">
    <source>
        <dbReference type="HAMAP-Rule" id="MF_01818"/>
    </source>
</evidence>
<proteinExistence type="inferred from homology"/>
<comment type="function">
    <text evidence="1">Zinc phosphodiesterase, which displays some tRNA 3'-processing endonuclease activity. Probably involved in tRNA maturation, by removing a 3'-trailer from precursor tRNA.</text>
</comment>
<comment type="catalytic activity">
    <reaction evidence="1">
        <text>Endonucleolytic cleavage of RNA, removing extra 3' nucleotides from tRNA precursor, generating 3' termini of tRNAs. A 3'-hydroxy group is left at the tRNA terminus and a 5'-phosphoryl group is left at the trailer molecule.</text>
        <dbReference type="EC" id="3.1.26.11"/>
    </reaction>
</comment>
<comment type="cofactor">
    <cofactor evidence="1">
        <name>Zn(2+)</name>
        <dbReference type="ChEBI" id="CHEBI:29105"/>
    </cofactor>
    <text evidence="1">Binds 2 Zn(2+) ions.</text>
</comment>
<comment type="subunit">
    <text evidence="1">Homodimer.</text>
</comment>
<comment type="similarity">
    <text evidence="1">Belongs to the RNase Z family.</text>
</comment>
<accession>C0ZBP8</accession>
<dbReference type="EC" id="3.1.26.11" evidence="1"/>
<dbReference type="EMBL" id="AP008955">
    <property type="protein sequence ID" value="BAH43207.1"/>
    <property type="molecule type" value="Genomic_DNA"/>
</dbReference>
<dbReference type="RefSeq" id="WP_012685934.1">
    <property type="nucleotide sequence ID" value="NC_012491.1"/>
</dbReference>
<dbReference type="SMR" id="C0ZBP8"/>
<dbReference type="STRING" id="358681.BBR47_22300"/>
<dbReference type="KEGG" id="bbe:BBR47_22300"/>
<dbReference type="eggNOG" id="COG1234">
    <property type="taxonomic scope" value="Bacteria"/>
</dbReference>
<dbReference type="HOGENOM" id="CLU_031317_2_0_9"/>
<dbReference type="Proteomes" id="UP000001877">
    <property type="component" value="Chromosome"/>
</dbReference>
<dbReference type="GO" id="GO:0042781">
    <property type="term" value="F:3'-tRNA processing endoribonuclease activity"/>
    <property type="evidence" value="ECO:0007669"/>
    <property type="project" value="UniProtKB-UniRule"/>
</dbReference>
<dbReference type="GO" id="GO:0008270">
    <property type="term" value="F:zinc ion binding"/>
    <property type="evidence" value="ECO:0007669"/>
    <property type="project" value="UniProtKB-UniRule"/>
</dbReference>
<dbReference type="CDD" id="cd07717">
    <property type="entry name" value="RNaseZ_ZiPD-like_MBL-fold"/>
    <property type="match status" value="1"/>
</dbReference>
<dbReference type="FunFam" id="3.60.15.10:FF:000002">
    <property type="entry name" value="Ribonuclease Z"/>
    <property type="match status" value="1"/>
</dbReference>
<dbReference type="Gene3D" id="3.60.15.10">
    <property type="entry name" value="Ribonuclease Z/Hydroxyacylglutathione hydrolase-like"/>
    <property type="match status" value="1"/>
</dbReference>
<dbReference type="HAMAP" id="MF_01818">
    <property type="entry name" value="RNase_Z_BN"/>
    <property type="match status" value="1"/>
</dbReference>
<dbReference type="InterPro" id="IPR001279">
    <property type="entry name" value="Metallo-B-lactamas"/>
</dbReference>
<dbReference type="InterPro" id="IPR036866">
    <property type="entry name" value="RibonucZ/Hydroxyglut_hydro"/>
</dbReference>
<dbReference type="InterPro" id="IPR013471">
    <property type="entry name" value="RNase_Z/BN"/>
</dbReference>
<dbReference type="NCBIfam" id="NF000801">
    <property type="entry name" value="PRK00055.1-3"/>
    <property type="match status" value="1"/>
</dbReference>
<dbReference type="NCBIfam" id="TIGR02651">
    <property type="entry name" value="RNase_Z"/>
    <property type="match status" value="1"/>
</dbReference>
<dbReference type="PANTHER" id="PTHR46018">
    <property type="entry name" value="ZINC PHOSPHODIESTERASE ELAC PROTEIN 1"/>
    <property type="match status" value="1"/>
</dbReference>
<dbReference type="PANTHER" id="PTHR46018:SF2">
    <property type="entry name" value="ZINC PHOSPHODIESTERASE ELAC PROTEIN 1"/>
    <property type="match status" value="1"/>
</dbReference>
<dbReference type="Pfam" id="PF12706">
    <property type="entry name" value="Lactamase_B_2"/>
    <property type="match status" value="2"/>
</dbReference>
<dbReference type="SUPFAM" id="SSF56281">
    <property type="entry name" value="Metallo-hydrolase/oxidoreductase"/>
    <property type="match status" value="1"/>
</dbReference>
<name>RNZ_BREBN</name>
<organism>
    <name type="scientific">Brevibacillus brevis (strain 47 / JCM 6285 / NBRC 100599)</name>
    <dbReference type="NCBI Taxonomy" id="358681"/>
    <lineage>
        <taxon>Bacteria</taxon>
        <taxon>Bacillati</taxon>
        <taxon>Bacillota</taxon>
        <taxon>Bacilli</taxon>
        <taxon>Bacillales</taxon>
        <taxon>Paenibacillaceae</taxon>
        <taxon>Brevibacillus</taxon>
    </lineage>
</organism>
<sequence>MIVTFLGTGSGAPTTRRNVSGIGLRFLQAGKWWLFDCGEGTQHQLLRAPMKISQLDKIFITHLHGDHLYGLIGLLASRSLRNTEPTPLELYGPPGLDRYFRGIMEASPVHLQYPLEIKIVSEGVIYEDEEIVVSCRMAKHRVPSFAYAVMEKEKTGAFQVERAKQAGVPSGPLFGALKRGEQVTLEDGRVLDGKDFVGEPQPGRKIVFSGDTEPSQAVLELAKGADLLVHEATYAHHDKELATRSGHSTAREAAQIAKEAGVKELCLTHFSPRYEDEDGDFSMEDLLAEAQQIFPATQLADDLGSISVKRERSDGRKP</sequence>
<reference key="1">
    <citation type="submission" date="2005-03" db="EMBL/GenBank/DDBJ databases">
        <title>Brevibacillus brevis strain 47, complete genome.</title>
        <authorList>
            <person name="Hosoyama A."/>
            <person name="Yamada R."/>
            <person name="Hongo Y."/>
            <person name="Terui Y."/>
            <person name="Ankai A."/>
            <person name="Masuyama W."/>
            <person name="Sekiguchi M."/>
            <person name="Takeda T."/>
            <person name="Asano K."/>
            <person name="Ohji S."/>
            <person name="Ichikawa N."/>
            <person name="Narita S."/>
            <person name="Aoki N."/>
            <person name="Miura H."/>
            <person name="Matsushita S."/>
            <person name="Sekigawa T."/>
            <person name="Yamagata H."/>
            <person name="Yoshikawa H."/>
            <person name="Udaka S."/>
            <person name="Tanikawa S."/>
            <person name="Fujita N."/>
        </authorList>
    </citation>
    <scope>NUCLEOTIDE SEQUENCE [LARGE SCALE GENOMIC DNA]</scope>
    <source>
        <strain>47 / JCM 6285 / NBRC 100599</strain>
    </source>
</reference>
<keyword id="KW-0255">Endonuclease</keyword>
<keyword id="KW-0378">Hydrolase</keyword>
<keyword id="KW-0479">Metal-binding</keyword>
<keyword id="KW-0540">Nuclease</keyword>
<keyword id="KW-1185">Reference proteome</keyword>
<keyword id="KW-0819">tRNA processing</keyword>
<keyword id="KW-0862">Zinc</keyword>
<gene>
    <name evidence="1" type="primary">rnz</name>
    <name type="ordered locus">BBR47_22300</name>
</gene>